<reference key="1">
    <citation type="journal article" date="1997" name="Nature">
        <title>The complete genome sequence of the Gram-positive bacterium Bacillus subtilis.</title>
        <authorList>
            <person name="Kunst F."/>
            <person name="Ogasawara N."/>
            <person name="Moszer I."/>
            <person name="Albertini A.M."/>
            <person name="Alloni G."/>
            <person name="Azevedo V."/>
            <person name="Bertero M.G."/>
            <person name="Bessieres P."/>
            <person name="Bolotin A."/>
            <person name="Borchert S."/>
            <person name="Borriss R."/>
            <person name="Boursier L."/>
            <person name="Brans A."/>
            <person name="Braun M."/>
            <person name="Brignell S.C."/>
            <person name="Bron S."/>
            <person name="Brouillet S."/>
            <person name="Bruschi C.V."/>
            <person name="Caldwell B."/>
            <person name="Capuano V."/>
            <person name="Carter N.M."/>
            <person name="Choi S.-K."/>
            <person name="Codani J.-J."/>
            <person name="Connerton I.F."/>
            <person name="Cummings N.J."/>
            <person name="Daniel R.A."/>
            <person name="Denizot F."/>
            <person name="Devine K.M."/>
            <person name="Duesterhoeft A."/>
            <person name="Ehrlich S.D."/>
            <person name="Emmerson P.T."/>
            <person name="Entian K.-D."/>
            <person name="Errington J."/>
            <person name="Fabret C."/>
            <person name="Ferrari E."/>
            <person name="Foulger D."/>
            <person name="Fritz C."/>
            <person name="Fujita M."/>
            <person name="Fujita Y."/>
            <person name="Fuma S."/>
            <person name="Galizzi A."/>
            <person name="Galleron N."/>
            <person name="Ghim S.-Y."/>
            <person name="Glaser P."/>
            <person name="Goffeau A."/>
            <person name="Golightly E.J."/>
            <person name="Grandi G."/>
            <person name="Guiseppi G."/>
            <person name="Guy B.J."/>
            <person name="Haga K."/>
            <person name="Haiech J."/>
            <person name="Harwood C.R."/>
            <person name="Henaut A."/>
            <person name="Hilbert H."/>
            <person name="Holsappel S."/>
            <person name="Hosono S."/>
            <person name="Hullo M.-F."/>
            <person name="Itaya M."/>
            <person name="Jones L.-M."/>
            <person name="Joris B."/>
            <person name="Karamata D."/>
            <person name="Kasahara Y."/>
            <person name="Klaerr-Blanchard M."/>
            <person name="Klein C."/>
            <person name="Kobayashi Y."/>
            <person name="Koetter P."/>
            <person name="Koningstein G."/>
            <person name="Krogh S."/>
            <person name="Kumano M."/>
            <person name="Kurita K."/>
            <person name="Lapidus A."/>
            <person name="Lardinois S."/>
            <person name="Lauber J."/>
            <person name="Lazarevic V."/>
            <person name="Lee S.-M."/>
            <person name="Levine A."/>
            <person name="Liu H."/>
            <person name="Masuda S."/>
            <person name="Mauel C."/>
            <person name="Medigue C."/>
            <person name="Medina N."/>
            <person name="Mellado R.P."/>
            <person name="Mizuno M."/>
            <person name="Moestl D."/>
            <person name="Nakai S."/>
            <person name="Noback M."/>
            <person name="Noone D."/>
            <person name="O'Reilly M."/>
            <person name="Ogawa K."/>
            <person name="Ogiwara A."/>
            <person name="Oudega B."/>
            <person name="Park S.-H."/>
            <person name="Parro V."/>
            <person name="Pohl T.M."/>
            <person name="Portetelle D."/>
            <person name="Porwollik S."/>
            <person name="Prescott A.M."/>
            <person name="Presecan E."/>
            <person name="Pujic P."/>
            <person name="Purnelle B."/>
            <person name="Rapoport G."/>
            <person name="Rey M."/>
            <person name="Reynolds S."/>
            <person name="Rieger M."/>
            <person name="Rivolta C."/>
            <person name="Rocha E."/>
            <person name="Roche B."/>
            <person name="Rose M."/>
            <person name="Sadaie Y."/>
            <person name="Sato T."/>
            <person name="Scanlan E."/>
            <person name="Schleich S."/>
            <person name="Schroeter R."/>
            <person name="Scoffone F."/>
            <person name="Sekiguchi J."/>
            <person name="Sekowska A."/>
            <person name="Seror S.J."/>
            <person name="Serror P."/>
            <person name="Shin B.-S."/>
            <person name="Soldo B."/>
            <person name="Sorokin A."/>
            <person name="Tacconi E."/>
            <person name="Takagi T."/>
            <person name="Takahashi H."/>
            <person name="Takemaru K."/>
            <person name="Takeuchi M."/>
            <person name="Tamakoshi A."/>
            <person name="Tanaka T."/>
            <person name="Terpstra P."/>
            <person name="Tognoni A."/>
            <person name="Tosato V."/>
            <person name="Uchiyama S."/>
            <person name="Vandenbol M."/>
            <person name="Vannier F."/>
            <person name="Vassarotti A."/>
            <person name="Viari A."/>
            <person name="Wambutt R."/>
            <person name="Wedler E."/>
            <person name="Wedler H."/>
            <person name="Weitzenegger T."/>
            <person name="Winters P."/>
            <person name="Wipat A."/>
            <person name="Yamamoto H."/>
            <person name="Yamane K."/>
            <person name="Yasumoto K."/>
            <person name="Yata K."/>
            <person name="Yoshida K."/>
            <person name="Yoshikawa H.-F."/>
            <person name="Zumstein E."/>
            <person name="Yoshikawa H."/>
            <person name="Danchin A."/>
        </authorList>
    </citation>
    <scope>NUCLEOTIDE SEQUENCE [LARGE SCALE GENOMIC DNA]</scope>
    <source>
        <strain>168</strain>
    </source>
</reference>
<reference key="2">
    <citation type="journal article" date="2009" name="Microbiology">
        <title>From a consortium sequence to a unified sequence: the Bacillus subtilis 168 reference genome a decade later.</title>
        <authorList>
            <person name="Barbe V."/>
            <person name="Cruveiller S."/>
            <person name="Kunst F."/>
            <person name="Lenoble P."/>
            <person name="Meurice G."/>
            <person name="Sekowska A."/>
            <person name="Vallenet D."/>
            <person name="Wang T."/>
            <person name="Moszer I."/>
            <person name="Medigue C."/>
            <person name="Danchin A."/>
        </authorList>
    </citation>
    <scope>SEQUENCE REVISION</scope>
</reference>
<dbReference type="EMBL" id="AL009126">
    <property type="protein sequence ID" value="CAB13564.3"/>
    <property type="molecule type" value="Genomic_DNA"/>
</dbReference>
<dbReference type="BMRB" id="O31771"/>
<dbReference type="SMR" id="O31771"/>
<dbReference type="STRING" id="224308.BSU16910"/>
<dbReference type="PaxDb" id="224308-BSU16910"/>
<dbReference type="EnsemblBacteria" id="CAB13564">
    <property type="protein sequence ID" value="CAB13564"/>
    <property type="gene ID" value="BSU_16910"/>
</dbReference>
<dbReference type="GeneID" id="939591"/>
<dbReference type="KEGG" id="bsu:BSU16910"/>
<dbReference type="PATRIC" id="fig|224308.43.peg.1786"/>
<dbReference type="eggNOG" id="COG1426">
    <property type="taxonomic scope" value="Bacteria"/>
</dbReference>
<dbReference type="InParanoid" id="O31771"/>
<dbReference type="OrthoDB" id="9797543at2"/>
<dbReference type="BioCyc" id="BSUB:BSU16910-MONOMER"/>
<dbReference type="Proteomes" id="UP000001570">
    <property type="component" value="Chromosome"/>
</dbReference>
<dbReference type="GO" id="GO:0005886">
    <property type="term" value="C:plasma membrane"/>
    <property type="evidence" value="ECO:0000318"/>
    <property type="project" value="GO_Central"/>
</dbReference>
<dbReference type="GO" id="GO:0003677">
    <property type="term" value="F:DNA binding"/>
    <property type="evidence" value="ECO:0007669"/>
    <property type="project" value="InterPro"/>
</dbReference>
<dbReference type="Gene3D" id="1.10.260.40">
    <property type="entry name" value="lambda repressor-like DNA-binding domains"/>
    <property type="match status" value="1"/>
</dbReference>
<dbReference type="InterPro" id="IPR050400">
    <property type="entry name" value="Bact_Cytoskel_RodZ"/>
</dbReference>
<dbReference type="InterPro" id="IPR010982">
    <property type="entry name" value="Lambda_DNA-bd_dom_sf"/>
</dbReference>
<dbReference type="InterPro" id="IPR025194">
    <property type="entry name" value="RodZ-like_C"/>
</dbReference>
<dbReference type="PANTHER" id="PTHR34475">
    <property type="match status" value="1"/>
</dbReference>
<dbReference type="PANTHER" id="PTHR34475:SF1">
    <property type="entry name" value="CYTOSKELETON PROTEIN RODZ"/>
    <property type="match status" value="1"/>
</dbReference>
<dbReference type="Pfam" id="PF13413">
    <property type="entry name" value="HTH_25"/>
    <property type="match status" value="1"/>
</dbReference>
<dbReference type="Pfam" id="PF13464">
    <property type="entry name" value="RodZ_C"/>
    <property type="match status" value="1"/>
</dbReference>
<evidence type="ECO:0000255" key="1"/>
<evidence type="ECO:0000256" key="2">
    <source>
        <dbReference type="SAM" id="MobiDB-lite"/>
    </source>
</evidence>
<evidence type="ECO:0000305" key="3"/>
<proteinExistence type="predicted"/>
<feature type="chain" id="PRO_0000375823" description="Uncharacterized membrane protein YmfM">
    <location>
        <begin position="1"/>
        <end position="288"/>
    </location>
</feature>
<feature type="transmembrane region" description="Helical" evidence="1">
    <location>
        <begin position="92"/>
        <end position="112"/>
    </location>
</feature>
<feature type="region of interest" description="Disordered" evidence="2">
    <location>
        <begin position="121"/>
        <end position="183"/>
    </location>
</feature>
<feature type="coiled-coil region" evidence="1">
    <location>
        <begin position="147"/>
        <end position="185"/>
    </location>
</feature>
<feature type="compositionally biased region" description="Basic and acidic residues" evidence="2">
    <location>
        <begin position="136"/>
        <end position="146"/>
    </location>
</feature>
<feature type="compositionally biased region" description="Basic and acidic residues" evidence="2">
    <location>
        <begin position="154"/>
        <end position="181"/>
    </location>
</feature>
<protein>
    <recommendedName>
        <fullName>Uncharacterized membrane protein YmfM</fullName>
    </recommendedName>
</protein>
<sequence length="288" mass="32436">MSLDDLQAATKIQKRYLTALEEGNYDIIPGKFYVRAFIKQYAEAVGLDADQLFEEHKKDIPNTYHDDVSEKISGMNLQKEMPKPASKALELLPTILVILGVIVVIAIVYAIIQFANHKNSDDHNAASEKAITQSESKYEIPKDSTLKENQNNSSEKETDTKKETKENEDKKKENDSEKLEIKAAGTEGSLTTYEVSGADKIELELKASDSSWIRVRDENSSSLKEGTLKKDETYKKDITDQKQVDIRTGYAPNLKIKINGKVLSYELDPKKVMAQTIKIVNKKEEKSS</sequence>
<accession>O31771</accession>
<gene>
    <name type="primary">ymfM</name>
    <name type="ordered locus">BSU16910</name>
</gene>
<comment type="subcellular location">
    <subcellularLocation>
        <location evidence="3">Cell membrane</location>
        <topology evidence="3">Single-pass membrane protein</topology>
    </subcellularLocation>
</comment>
<keyword id="KW-1003">Cell membrane</keyword>
<keyword id="KW-0175">Coiled coil</keyword>
<keyword id="KW-0472">Membrane</keyword>
<keyword id="KW-1185">Reference proteome</keyword>
<keyword id="KW-0812">Transmembrane</keyword>
<keyword id="KW-1133">Transmembrane helix</keyword>
<organism>
    <name type="scientific">Bacillus subtilis (strain 168)</name>
    <dbReference type="NCBI Taxonomy" id="224308"/>
    <lineage>
        <taxon>Bacteria</taxon>
        <taxon>Bacillati</taxon>
        <taxon>Bacillota</taxon>
        <taxon>Bacilli</taxon>
        <taxon>Bacillales</taxon>
        <taxon>Bacillaceae</taxon>
        <taxon>Bacillus</taxon>
    </lineage>
</organism>
<name>YMFM_BACSU</name>